<reference key="1">
    <citation type="journal article" date="1989" name="Mol. Endocrinol.">
        <title>Rat P450(17 alpha) from testis: characterization of a full-length cDNA encoding a unique steroid hydroxylase capable of catalyzing both delta 4- and delta 5-steroid-17,20-lyase reactions.</title>
        <authorList>
            <person name="Fevold H.R."/>
            <person name="Lorence M.C."/>
            <person name="McCarthy J.L."/>
            <person name="Trant J.M."/>
            <person name="Kagimoto M."/>
            <person name="Waterman M.R."/>
            <person name="Mason J.I."/>
        </authorList>
    </citation>
    <scope>NUCLEOTIDE SEQUENCE</scope>
</reference>
<reference key="2">
    <citation type="journal article" date="1988" name="Biochem. Biophys. Res. Commun.">
        <title>Rat testis P-450(17)alpha cDNA: the deduced amino acid sequence, expression and secondary structural configuration.</title>
        <authorList>
            <person name="Namiki M."/>
            <person name="Kitamura M."/>
            <person name="Buczko E."/>
            <person name="Dufau M.L."/>
        </authorList>
    </citation>
    <scope>NUCLEOTIDE SEQUENCE</scope>
    <source>
        <tissue>Testis</tissue>
    </source>
</reference>
<reference key="3">
    <citation type="journal article" date="1994" name="DNA Cell Biol.">
        <title>Transcriptional regulation of rat cytochrome P450c17 expression in mouse Leydig MA-10 and adrenal Y-1 cells: identification of a single protein that mediates both basal and cAMP-induced activities.</title>
        <authorList>
            <person name="Givens C.R."/>
            <person name="Zhang P."/>
            <person name="Bair S.R."/>
            <person name="Mellon S.H."/>
        </authorList>
    </citation>
    <scope>NUCLEOTIDE SEQUENCE [GENOMIC DNA]</scope>
    <source>
        <strain>Sprague-Dawley</strain>
    </source>
</reference>
<reference key="4">
    <citation type="journal article" date="2004" name="Genome Res.">
        <title>The status, quality, and expansion of the NIH full-length cDNA project: the Mammalian Gene Collection (MGC).</title>
        <authorList>
            <consortium name="The MGC Project Team"/>
        </authorList>
    </citation>
    <scope>NUCLEOTIDE SEQUENCE [LARGE SCALE MRNA]</scope>
    <source>
        <tissue>Testis</tissue>
    </source>
</reference>
<reference key="5">
    <citation type="journal article" date="1992" name="Biochim. Biophys. Acta">
        <title>Gene for 17 alpha-hydroxylase/C (17-20) lyase P-450: complete nucleotide sequence of the porcine gene and 5' upstream sequence of the rat gene.</title>
        <authorList>
            <person name="Zhang P."/>
            <person name="Nason T.F."/>
            <person name="Han X.G."/>
            <person name="Hall P.F."/>
        </authorList>
    </citation>
    <scope>NUCLEOTIDE SEQUENCE [GENOMIC DNA] OF 1-97</scope>
</reference>
<reference key="6">
    <citation type="journal article" date="1988" name="Biochem. Biophys. Res. Commun.">
        <title>Hormonal regulation of rat Leydig cell cytochrome P-45017 alpha mRNA levels and characterization of a partial length rat P-45017 alpha cDNA.</title>
        <authorList>
            <person name="Nishihara M."/>
            <person name="Winters C.A."/>
            <person name="Buzko E."/>
            <person name="Waterman M.R."/>
            <person name="Dufau M.L."/>
        </authorList>
    </citation>
    <scope>NUCLEOTIDE SEQUENCE [MRNA] OF 271-507</scope>
</reference>
<reference key="7">
    <citation type="journal article" date="1989" name="Proc. Natl. Acad. Sci. U.S.A.">
        <title>cAMP regulates P450scc gene expression by a cycloheximide-insensitive mechanism in cultured mouse Leydig MA-10 cells.</title>
        <authorList>
            <person name="Mellon S.H."/>
            <person name="Vaisse C."/>
        </authorList>
    </citation>
    <scope>NUCLEOTIDE SEQUENCE [MRNA] OF 273-507</scope>
</reference>
<reference key="8">
    <citation type="journal article" date="1987" name="J. Biochem.">
        <title>Purification and characterization of six cytochromes P-450 from hepatic microsomes of immature female rats.</title>
        <authorList>
            <person name="Imaoka S."/>
            <person name="Kamataki T."/>
            <person name="Funae Y."/>
        </authorList>
    </citation>
    <scope>PROTEIN SEQUENCE OF 1-16</scope>
</reference>
<feature type="chain" id="PRO_0000051941" description="Steroid 17-alpha-hydroxylase/17,20 lyase">
    <location>
        <begin position="1"/>
        <end position="507"/>
    </location>
</feature>
<feature type="binding site" description="axial binding residue" evidence="1">
    <location>
        <position position="441"/>
    </location>
    <ligand>
        <name>heme</name>
        <dbReference type="ChEBI" id="CHEBI:30413"/>
    </ligand>
    <ligandPart>
        <name>Fe</name>
        <dbReference type="ChEBI" id="CHEBI:18248"/>
    </ligandPart>
</feature>
<feature type="sequence conflict" description="In Ref. 4; AAH78898." evidence="3" ref="4">
    <original>N</original>
    <variation>K</variation>
    <location>
        <position position="190"/>
    </location>
</feature>
<feature type="sequence conflict" description="In Ref. 6; AAA41050." evidence="3" ref="6">
    <original>VS</original>
    <variation>LT</variation>
    <location>
        <begin position="505"/>
        <end position="506"/>
    </location>
</feature>
<sequence length="507" mass="57250">MWELVGLLLLILAYFFWVKSKTPGAKLPRSLPSLPLVGSLPFLPRRGHMHVNFFKLQEKYGPIYSLRLGTTTTVIIGHYQLAREVLIKKGKEFSGRPQMVTQSLLSDQGKGVAFADAGSSWHLHRKLVFSTFSLFKDGQKLEKLICQEAKSLCDMMLAHDKESIDLSTPIFMSVTNIICAICFNISYEKNDPKLTAIKTFTEGIVDATGDRNLVDIFPWLTIFPNKGLEVIKGYAKVRNEVLTGIFEKCREKFDSQSISSLTDILIQAKMNSDNNNSCEGRDPDVFSDRHILATVGDIFGAGIETTTTVLKWILAFLVHNPEVKKKIQKEIDQYVGFSRTPTFNDRSHLLMLEATIREVLRIRPVAPMLIPHKANVDSSIGEFTVPKDTHVVVNLWALHHDENEWDQPDQFMPERFLDPTGSHLITPTQSYLPFGAGPRSCIGEALARQELFVFTALLLQRFDLDVSDDKQLPRLEGDPKVVFLIDPFKVKITVRQAWMDAQAEVST</sequence>
<keyword id="KW-0903">Direct protein sequencing</keyword>
<keyword id="KW-0256">Endoplasmic reticulum</keyword>
<keyword id="KW-0349">Heme</keyword>
<keyword id="KW-0408">Iron</keyword>
<keyword id="KW-0443">Lipid metabolism</keyword>
<keyword id="KW-0456">Lyase</keyword>
<keyword id="KW-0472">Membrane</keyword>
<keyword id="KW-0479">Metal-binding</keyword>
<keyword id="KW-0492">Microsome</keyword>
<keyword id="KW-0503">Monooxygenase</keyword>
<keyword id="KW-0560">Oxidoreductase</keyword>
<keyword id="KW-1185">Reference proteome</keyword>
<keyword id="KW-0755">Steroidogenesis</keyword>
<protein>
    <recommendedName>
        <fullName>Steroid 17-alpha-hydroxylase/17,20 lyase</fullName>
        <ecNumber evidence="2">1.14.14.19</ecNumber>
    </recommendedName>
    <alternativeName>
        <fullName>17-alpha-hydroxyprogesterone aldolase</fullName>
        <ecNumber evidence="2">1.14.14.32</ecNumber>
    </alternativeName>
    <alternativeName>
        <fullName>CYPXVII</fullName>
    </alternativeName>
    <alternativeName>
        <fullName>Cytochrome P450 17A1</fullName>
    </alternativeName>
    <alternativeName>
        <fullName>Cytochrome P450-C17</fullName>
        <shortName>Cytochrome P450c17</shortName>
    </alternativeName>
    <alternativeName>
        <fullName>Steroid 17-alpha-monooxygenase</fullName>
    </alternativeName>
</protein>
<comment type="function">
    <text evidence="2">A cytochrome P450 monooxygenase involved in corticoid and androgen biosynthesis. Catalyzes 17-alpha hydroxylation of C21 steroids, which is common for both pathways. A second oxidative step, required only for androgen synthesis, involves an acyl-carbon cleavage. The 17-alpha hydroxy intermediates, as part of adrenal glucocorticoids biosynthesis pathway, are precursors of cortisol. Hydroxylates steroid hormones, pregnenolone and progesterone to form 17-alpha hydroxy metabolites, followed by the cleavage of the C17-C20 bond to form C19 steroids, dehydroepiandrosterone (DHEA) and androstenedione. Has 16-alpha hydroxylase activity. Catalyzes 16-alpha hydroxylation of 17-alpha hydroxy pregnenolone, followed by the cleavage of the C17-C20 bond to form 16-alpha-hydroxy DHEA. Also 16-alpha hydroxylates androgens, relevant for estriol synthesis. Mechanistically, uses molecular oxygen inserting one oxygen atom into a substrate, and reducing the second into a water molecule, with two electrons provided by NADPH via cytochrome P450 reductase (CPR; NADPH-ferrihemoprotein reductase).</text>
</comment>
<comment type="catalytic activity">
    <reaction evidence="2">
        <text>a C21-steroid + reduced [NADPH--hemoprotein reductase] + O2 = a 17alpha-hydroxy-C21-steroid + oxidized [NADPH--hemoprotein reductase] + H2O + H(+)</text>
        <dbReference type="Rhea" id="RHEA:65760"/>
        <dbReference type="Rhea" id="RHEA-COMP:11964"/>
        <dbReference type="Rhea" id="RHEA-COMP:11965"/>
        <dbReference type="ChEBI" id="CHEBI:15377"/>
        <dbReference type="ChEBI" id="CHEBI:15378"/>
        <dbReference type="ChEBI" id="CHEBI:15379"/>
        <dbReference type="ChEBI" id="CHEBI:57618"/>
        <dbReference type="ChEBI" id="CHEBI:58210"/>
        <dbReference type="ChEBI" id="CHEBI:61313"/>
        <dbReference type="ChEBI" id="CHEBI:138141"/>
        <dbReference type="EC" id="1.14.14.19"/>
    </reaction>
    <physiologicalReaction direction="left-to-right" evidence="2">
        <dbReference type="Rhea" id="RHEA:65761"/>
    </physiologicalReaction>
</comment>
<comment type="catalytic activity">
    <reaction evidence="2">
        <text>progesterone + reduced [NADPH--hemoprotein reductase] + O2 = 17alpha-hydroxyprogesterone + oxidized [NADPH--hemoprotein reductase] + H2O + H(+)</text>
        <dbReference type="Rhea" id="RHEA:46308"/>
        <dbReference type="Rhea" id="RHEA-COMP:11964"/>
        <dbReference type="Rhea" id="RHEA-COMP:11965"/>
        <dbReference type="ChEBI" id="CHEBI:15377"/>
        <dbReference type="ChEBI" id="CHEBI:15378"/>
        <dbReference type="ChEBI" id="CHEBI:15379"/>
        <dbReference type="ChEBI" id="CHEBI:17026"/>
        <dbReference type="ChEBI" id="CHEBI:17252"/>
        <dbReference type="ChEBI" id="CHEBI:57618"/>
        <dbReference type="ChEBI" id="CHEBI:58210"/>
        <dbReference type="EC" id="1.14.14.19"/>
    </reaction>
    <physiologicalReaction direction="left-to-right" evidence="2">
        <dbReference type="Rhea" id="RHEA:46309"/>
    </physiologicalReaction>
</comment>
<comment type="catalytic activity">
    <reaction evidence="2">
        <text>pregnenolone + reduced [NADPH--hemoprotein reductase] + O2 = 17alpha-hydroxypregnenolone + oxidized [NADPH--hemoprotein reductase] + H2O + H(+)</text>
        <dbReference type="Rhea" id="RHEA:50236"/>
        <dbReference type="Rhea" id="RHEA-COMP:11964"/>
        <dbReference type="Rhea" id="RHEA-COMP:11965"/>
        <dbReference type="ChEBI" id="CHEBI:15377"/>
        <dbReference type="ChEBI" id="CHEBI:15378"/>
        <dbReference type="ChEBI" id="CHEBI:15379"/>
        <dbReference type="ChEBI" id="CHEBI:16581"/>
        <dbReference type="ChEBI" id="CHEBI:28750"/>
        <dbReference type="ChEBI" id="CHEBI:57618"/>
        <dbReference type="ChEBI" id="CHEBI:58210"/>
        <dbReference type="EC" id="1.14.14.19"/>
    </reaction>
    <physiologicalReaction direction="left-to-right" evidence="2">
        <dbReference type="Rhea" id="RHEA:50237"/>
    </physiologicalReaction>
</comment>
<comment type="catalytic activity">
    <reaction evidence="2">
        <text>17alpha-hydroxyprogesterone + reduced [NADPH--hemoprotein reductase] + O2 = androst-4-ene-3,17-dione + acetate + oxidized [NADPH--hemoprotein reductase] + H2O + 2 H(+)</text>
        <dbReference type="Rhea" id="RHEA:14753"/>
        <dbReference type="Rhea" id="RHEA-COMP:11964"/>
        <dbReference type="Rhea" id="RHEA-COMP:11965"/>
        <dbReference type="ChEBI" id="CHEBI:15377"/>
        <dbReference type="ChEBI" id="CHEBI:15378"/>
        <dbReference type="ChEBI" id="CHEBI:15379"/>
        <dbReference type="ChEBI" id="CHEBI:16422"/>
        <dbReference type="ChEBI" id="CHEBI:17252"/>
        <dbReference type="ChEBI" id="CHEBI:30089"/>
        <dbReference type="ChEBI" id="CHEBI:57618"/>
        <dbReference type="ChEBI" id="CHEBI:58210"/>
        <dbReference type="EC" id="1.14.14.32"/>
    </reaction>
    <physiologicalReaction direction="left-to-right" evidence="2">
        <dbReference type="Rhea" id="RHEA:14754"/>
    </physiologicalReaction>
</comment>
<comment type="catalytic activity">
    <reaction evidence="2">
        <text>17alpha-hydroxyprogesterone + reduced [NADPH--hemoprotein reductase] + O2 = 16alpha,17alpha-dihydroxyprogesterone + oxidized [NADPH--hemoprotein reductase] + H2O + H(+)</text>
        <dbReference type="Rhea" id="RHEA:53216"/>
        <dbReference type="Rhea" id="RHEA-COMP:11964"/>
        <dbReference type="Rhea" id="RHEA-COMP:11965"/>
        <dbReference type="ChEBI" id="CHEBI:763"/>
        <dbReference type="ChEBI" id="CHEBI:15377"/>
        <dbReference type="ChEBI" id="CHEBI:15378"/>
        <dbReference type="ChEBI" id="CHEBI:15379"/>
        <dbReference type="ChEBI" id="CHEBI:17252"/>
        <dbReference type="ChEBI" id="CHEBI:57618"/>
        <dbReference type="ChEBI" id="CHEBI:58210"/>
    </reaction>
    <physiologicalReaction direction="left-to-right" evidence="2">
        <dbReference type="Rhea" id="RHEA:53217"/>
    </physiologicalReaction>
</comment>
<comment type="catalytic activity">
    <reaction evidence="2">
        <text>16alpha,17alpha-dihydroxyprogesterone + reduced [NADPH--hemoprotein reductase] + O2 = 6beta,16alpha,17alpha-trihydroxyprogesterone + oxidized [NADPH--hemoprotein reductase] + H2O + H(+)</text>
        <dbReference type="Rhea" id="RHEA:53220"/>
        <dbReference type="Rhea" id="RHEA-COMP:11964"/>
        <dbReference type="Rhea" id="RHEA-COMP:11965"/>
        <dbReference type="ChEBI" id="CHEBI:763"/>
        <dbReference type="ChEBI" id="CHEBI:15377"/>
        <dbReference type="ChEBI" id="CHEBI:15378"/>
        <dbReference type="ChEBI" id="CHEBI:15379"/>
        <dbReference type="ChEBI" id="CHEBI:57618"/>
        <dbReference type="ChEBI" id="CHEBI:58210"/>
        <dbReference type="ChEBI" id="CHEBI:137046"/>
    </reaction>
    <physiologicalReaction direction="left-to-right" evidence="2">
        <dbReference type="Rhea" id="RHEA:53221"/>
    </physiologicalReaction>
</comment>
<comment type="catalytic activity">
    <reaction evidence="2">
        <text>17alpha-hydroxypregnenolone + reduced [NADPH--hemoprotein reductase] + O2 = 3beta-hydroxyandrost-5-en-17-one + acetate + oxidized [NADPH--hemoprotein reductase] + H2O + 2 H(+)</text>
        <dbReference type="Rhea" id="RHEA:50244"/>
        <dbReference type="Rhea" id="RHEA-COMP:11964"/>
        <dbReference type="Rhea" id="RHEA-COMP:11965"/>
        <dbReference type="ChEBI" id="CHEBI:15377"/>
        <dbReference type="ChEBI" id="CHEBI:15378"/>
        <dbReference type="ChEBI" id="CHEBI:15379"/>
        <dbReference type="ChEBI" id="CHEBI:28689"/>
        <dbReference type="ChEBI" id="CHEBI:28750"/>
        <dbReference type="ChEBI" id="CHEBI:30089"/>
        <dbReference type="ChEBI" id="CHEBI:57618"/>
        <dbReference type="ChEBI" id="CHEBI:58210"/>
        <dbReference type="EC" id="1.14.14.32"/>
    </reaction>
    <physiologicalReaction direction="left-to-right" evidence="2">
        <dbReference type="Rhea" id="RHEA:50245"/>
    </physiologicalReaction>
</comment>
<comment type="catalytic activity">
    <reaction evidence="2">
        <text>16alpha,17alpha-dihydroxypregnenolone + reduced [NADPH--hemoprotein reductase] + O2 = 3beta,16alpha-dihydroxy-androst-5-en-17-one + acetate + oxidized [NADPH--hemoprotein reductase] + H2O + 2 H(+)</text>
        <dbReference type="Rhea" id="RHEA:53224"/>
        <dbReference type="Rhea" id="RHEA-COMP:11964"/>
        <dbReference type="Rhea" id="RHEA-COMP:11965"/>
        <dbReference type="ChEBI" id="CHEBI:15377"/>
        <dbReference type="ChEBI" id="CHEBI:15378"/>
        <dbReference type="ChEBI" id="CHEBI:15379"/>
        <dbReference type="ChEBI" id="CHEBI:27771"/>
        <dbReference type="ChEBI" id="CHEBI:30089"/>
        <dbReference type="ChEBI" id="CHEBI:57618"/>
        <dbReference type="ChEBI" id="CHEBI:58210"/>
        <dbReference type="ChEBI" id="CHEBI:137049"/>
    </reaction>
    <physiologicalReaction direction="left-to-right" evidence="2">
        <dbReference type="Rhea" id="RHEA:53225"/>
    </physiologicalReaction>
</comment>
<comment type="catalytic activity">
    <reaction evidence="2">
        <text>3beta-hydroxyandrost-5-en-17-one + reduced [NADPH--hemoprotein reductase] + O2 = 3beta,16alpha-dihydroxy-androst-5-en-17-one + oxidized [NADPH--hemoprotein reductase] + H2O + H(+)</text>
        <dbReference type="Rhea" id="RHEA:47220"/>
        <dbReference type="Rhea" id="RHEA-COMP:11964"/>
        <dbReference type="Rhea" id="RHEA-COMP:11965"/>
        <dbReference type="ChEBI" id="CHEBI:15377"/>
        <dbReference type="ChEBI" id="CHEBI:15378"/>
        <dbReference type="ChEBI" id="CHEBI:15379"/>
        <dbReference type="ChEBI" id="CHEBI:27771"/>
        <dbReference type="ChEBI" id="CHEBI:28689"/>
        <dbReference type="ChEBI" id="CHEBI:57618"/>
        <dbReference type="ChEBI" id="CHEBI:58210"/>
    </reaction>
    <physiologicalReaction direction="left-to-right" evidence="2">
        <dbReference type="Rhea" id="RHEA:47221"/>
    </physiologicalReaction>
</comment>
<comment type="catalytic activity">
    <reaction evidence="2">
        <text>androst-4-ene-3,17-dione + reduced [NADPH--hemoprotein reductase] + O2 = 16alpha-hydroxyandrost-4-ene-3,17-dione + oxidized [NADPH--hemoprotein reductase] + H2O + H(+)</text>
        <dbReference type="Rhea" id="RHEA:53228"/>
        <dbReference type="Rhea" id="RHEA-COMP:11964"/>
        <dbReference type="Rhea" id="RHEA-COMP:11965"/>
        <dbReference type="ChEBI" id="CHEBI:15377"/>
        <dbReference type="ChEBI" id="CHEBI:15378"/>
        <dbReference type="ChEBI" id="CHEBI:15379"/>
        <dbReference type="ChEBI" id="CHEBI:16422"/>
        <dbReference type="ChEBI" id="CHEBI:27582"/>
        <dbReference type="ChEBI" id="CHEBI:57618"/>
        <dbReference type="ChEBI" id="CHEBI:58210"/>
    </reaction>
    <physiologicalReaction direction="left-to-right" evidence="2">
        <dbReference type="Rhea" id="RHEA:53229"/>
    </physiologicalReaction>
</comment>
<comment type="cofactor">
    <cofactor evidence="2">
        <name>heme</name>
        <dbReference type="ChEBI" id="CHEBI:30413"/>
    </cofactor>
</comment>
<comment type="activity regulation">
    <text evidence="2">Regulated predominantly by intracellular cAMP levels. The 17,20-lyase activity is stimulated by cytochrome b5, which acts as an allosteric effector increasing the Vmax of the lyase activity.</text>
</comment>
<comment type="pathway">
    <text evidence="2">Steroid hormone biosynthesis.</text>
</comment>
<comment type="pathway">
    <text evidence="2">Steroid biosynthesis; glucocorticoid biosynthesis.</text>
</comment>
<comment type="subcellular location">
    <subcellularLocation>
        <location evidence="2">Endoplasmic reticulum membrane</location>
    </subcellularLocation>
    <subcellularLocation>
        <location evidence="2">Microsome membrane</location>
    </subcellularLocation>
</comment>
<comment type="similarity">
    <text evidence="3">Belongs to the cytochrome P450 family.</text>
</comment>
<dbReference type="EC" id="1.14.14.19" evidence="2"/>
<dbReference type="EC" id="1.14.14.32" evidence="2"/>
<dbReference type="EMBL" id="X14086">
    <property type="protein sequence ID" value="CAA32248.1"/>
    <property type="molecule type" value="mRNA"/>
</dbReference>
<dbReference type="EMBL" id="X69816">
    <property type="protein sequence ID" value="CAA49470.1"/>
    <property type="molecule type" value="Genomic_DNA"/>
</dbReference>
<dbReference type="EMBL" id="M31681">
    <property type="protein sequence ID" value="AAA41777.1"/>
    <property type="molecule type" value="mRNA"/>
</dbReference>
<dbReference type="EMBL" id="M22204">
    <property type="protein sequence ID" value="AAA41783.1"/>
    <property type="molecule type" value="mRNA"/>
</dbReference>
<dbReference type="EMBL" id="BC078898">
    <property type="protein sequence ID" value="AAH78898.1"/>
    <property type="molecule type" value="mRNA"/>
</dbReference>
<dbReference type="EMBL" id="Z11902">
    <property type="protein sequence ID" value="CAA77954.1"/>
    <property type="molecule type" value="Genomic_DNA"/>
</dbReference>
<dbReference type="EMBL" id="M21208">
    <property type="protein sequence ID" value="AAA41050.1"/>
    <property type="molecule type" value="mRNA"/>
</dbReference>
<dbReference type="EMBL" id="M27282">
    <property type="protein sequence ID" value="AAA41779.1"/>
    <property type="molecule type" value="mRNA"/>
</dbReference>
<dbReference type="PIR" id="A31359">
    <property type="entry name" value="A30828"/>
</dbReference>
<dbReference type="RefSeq" id="NP_036885.1">
    <property type="nucleotide sequence ID" value="NM_012753.2"/>
</dbReference>
<dbReference type="RefSeq" id="XP_006231496.1">
    <property type="nucleotide sequence ID" value="XM_006231434.3"/>
</dbReference>
<dbReference type="RefSeq" id="XP_006231497.1">
    <property type="nucleotide sequence ID" value="XM_006231435.3"/>
</dbReference>
<dbReference type="SMR" id="P11715"/>
<dbReference type="FunCoup" id="P11715">
    <property type="interactions" value="119"/>
</dbReference>
<dbReference type="STRING" id="10116.ENSRNOP00000027160"/>
<dbReference type="BindingDB" id="P11715"/>
<dbReference type="ChEMBL" id="CHEMBL4430"/>
<dbReference type="DrugCentral" id="P11715"/>
<dbReference type="iPTMnet" id="P11715"/>
<dbReference type="PhosphoSitePlus" id="P11715"/>
<dbReference type="PaxDb" id="10116-ENSRNOP00000027160"/>
<dbReference type="GeneID" id="25146"/>
<dbReference type="KEGG" id="rno:25146"/>
<dbReference type="UCSC" id="RGD:2456">
    <property type="organism name" value="rat"/>
</dbReference>
<dbReference type="AGR" id="RGD:2456"/>
<dbReference type="CTD" id="1586"/>
<dbReference type="RGD" id="2456">
    <property type="gene designation" value="Cyp17a1"/>
</dbReference>
<dbReference type="eggNOG" id="KOG0156">
    <property type="taxonomic scope" value="Eukaryota"/>
</dbReference>
<dbReference type="InParanoid" id="P11715"/>
<dbReference type="OrthoDB" id="1470350at2759"/>
<dbReference type="PhylomeDB" id="P11715"/>
<dbReference type="TreeFam" id="TF105095"/>
<dbReference type="Reactome" id="R-RNO-193048">
    <property type="pathway name" value="Androgen biosynthesis"/>
</dbReference>
<dbReference type="Reactome" id="R-RNO-194002">
    <property type="pathway name" value="Glucocorticoid biosynthesis"/>
</dbReference>
<dbReference type="UniPathway" id="UPA00788"/>
<dbReference type="PRO" id="PR:P11715"/>
<dbReference type="Proteomes" id="UP000002494">
    <property type="component" value="Unplaced"/>
</dbReference>
<dbReference type="GO" id="GO:0030424">
    <property type="term" value="C:axon"/>
    <property type="evidence" value="ECO:0000266"/>
    <property type="project" value="RGD"/>
</dbReference>
<dbReference type="GO" id="GO:0042995">
    <property type="term" value="C:cell projection"/>
    <property type="evidence" value="ECO:0000314"/>
    <property type="project" value="RGD"/>
</dbReference>
<dbReference type="GO" id="GO:0005783">
    <property type="term" value="C:endoplasmic reticulum"/>
    <property type="evidence" value="ECO:0000266"/>
    <property type="project" value="RGD"/>
</dbReference>
<dbReference type="GO" id="GO:0005789">
    <property type="term" value="C:endoplasmic reticulum membrane"/>
    <property type="evidence" value="ECO:0000266"/>
    <property type="project" value="RGD"/>
</dbReference>
<dbReference type="GO" id="GO:0043025">
    <property type="term" value="C:neuronal cell body"/>
    <property type="evidence" value="ECO:0000314"/>
    <property type="project" value="RGD"/>
</dbReference>
<dbReference type="GO" id="GO:0020037">
    <property type="term" value="F:heme binding"/>
    <property type="evidence" value="ECO:0000250"/>
    <property type="project" value="UniProtKB"/>
</dbReference>
<dbReference type="GO" id="GO:0005506">
    <property type="term" value="F:iron ion binding"/>
    <property type="evidence" value="ECO:0007669"/>
    <property type="project" value="InterPro"/>
</dbReference>
<dbReference type="GO" id="GO:0016829">
    <property type="term" value="F:lyase activity"/>
    <property type="evidence" value="ECO:0007669"/>
    <property type="project" value="UniProtKB-KW"/>
</dbReference>
<dbReference type="GO" id="GO:0004508">
    <property type="term" value="F:steroid 17-alpha-monooxygenase activity"/>
    <property type="evidence" value="ECO:0000314"/>
    <property type="project" value="RGD"/>
</dbReference>
<dbReference type="GO" id="GO:0030325">
    <property type="term" value="P:adrenal gland development"/>
    <property type="evidence" value="ECO:0000270"/>
    <property type="project" value="RGD"/>
</dbReference>
<dbReference type="GO" id="GO:0006702">
    <property type="term" value="P:androgen biosynthetic process"/>
    <property type="evidence" value="ECO:0000266"/>
    <property type="project" value="RGD"/>
</dbReference>
<dbReference type="GO" id="GO:0018879">
    <property type="term" value="P:biphenyl metabolic process"/>
    <property type="evidence" value="ECO:0000270"/>
    <property type="project" value="RGD"/>
</dbReference>
<dbReference type="GO" id="GO:0071236">
    <property type="term" value="P:cellular response to antibiotic"/>
    <property type="evidence" value="ECO:0000270"/>
    <property type="project" value="RGD"/>
</dbReference>
<dbReference type="GO" id="GO:0071371">
    <property type="term" value="P:cellular response to gonadotropin stimulus"/>
    <property type="evidence" value="ECO:0000270"/>
    <property type="project" value="RGD"/>
</dbReference>
<dbReference type="GO" id="GO:0071222">
    <property type="term" value="P:cellular response to lipopolysaccharide"/>
    <property type="evidence" value="ECO:0000270"/>
    <property type="project" value="RGD"/>
</dbReference>
<dbReference type="GO" id="GO:0006704">
    <property type="term" value="P:glucocorticoid biosynthetic process"/>
    <property type="evidence" value="ECO:0000266"/>
    <property type="project" value="RGD"/>
</dbReference>
<dbReference type="GO" id="GO:0021766">
    <property type="term" value="P:hippocampus development"/>
    <property type="evidence" value="ECO:0000270"/>
    <property type="project" value="RGD"/>
</dbReference>
<dbReference type="GO" id="GO:0042446">
    <property type="term" value="P:hormone biosynthetic process"/>
    <property type="evidence" value="ECO:0000250"/>
    <property type="project" value="UniProtKB"/>
</dbReference>
<dbReference type="GO" id="GO:0033327">
    <property type="term" value="P:Leydig cell differentiation"/>
    <property type="evidence" value="ECO:0000270"/>
    <property type="project" value="RGD"/>
</dbReference>
<dbReference type="GO" id="GO:0008584">
    <property type="term" value="P:male gonad development"/>
    <property type="evidence" value="ECO:0000270"/>
    <property type="project" value="RGD"/>
</dbReference>
<dbReference type="GO" id="GO:0006082">
    <property type="term" value="P:organic acid metabolic process"/>
    <property type="evidence" value="ECO:0000270"/>
    <property type="project" value="RGD"/>
</dbReference>
<dbReference type="GO" id="GO:0018958">
    <property type="term" value="P:phenol-containing compound metabolic process"/>
    <property type="evidence" value="ECO:0000270"/>
    <property type="project" value="RGD"/>
</dbReference>
<dbReference type="GO" id="GO:0018963">
    <property type="term" value="P:phthalate metabolic process"/>
    <property type="evidence" value="ECO:0000270"/>
    <property type="project" value="RGD"/>
</dbReference>
<dbReference type="GO" id="GO:0090031">
    <property type="term" value="P:positive regulation of steroid hormone biosynthetic process"/>
    <property type="evidence" value="ECO:0000315"/>
    <property type="project" value="RGD"/>
</dbReference>
<dbReference type="GO" id="GO:0042448">
    <property type="term" value="P:progesterone metabolic process"/>
    <property type="evidence" value="ECO:0000250"/>
    <property type="project" value="UniProtKB"/>
</dbReference>
<dbReference type="GO" id="GO:1904612">
    <property type="term" value="P:response to 2,3,7,8-tetrachlorodibenzodioxine"/>
    <property type="evidence" value="ECO:0000270"/>
    <property type="project" value="RGD"/>
</dbReference>
<dbReference type="GO" id="GO:0010034">
    <property type="term" value="P:response to acetate"/>
    <property type="evidence" value="ECO:0000270"/>
    <property type="project" value="RGD"/>
</dbReference>
<dbReference type="GO" id="GO:0051591">
    <property type="term" value="P:response to cAMP"/>
    <property type="evidence" value="ECO:0000270"/>
    <property type="project" value="RGD"/>
</dbReference>
<dbReference type="GO" id="GO:0034097">
    <property type="term" value="P:response to cytokine"/>
    <property type="evidence" value="ECO:0000270"/>
    <property type="project" value="RGD"/>
</dbReference>
<dbReference type="GO" id="GO:0060992">
    <property type="term" value="P:response to fungicide"/>
    <property type="evidence" value="ECO:0000270"/>
    <property type="project" value="RGD"/>
</dbReference>
<dbReference type="GO" id="GO:0034698">
    <property type="term" value="P:response to gonadotropin"/>
    <property type="evidence" value="ECO:0000270"/>
    <property type="project" value="RGD"/>
</dbReference>
<dbReference type="GO" id="GO:0009635">
    <property type="term" value="P:response to herbicide"/>
    <property type="evidence" value="ECO:0000270"/>
    <property type="project" value="RGD"/>
</dbReference>
<dbReference type="GO" id="GO:0017085">
    <property type="term" value="P:response to insecticide"/>
    <property type="evidence" value="ECO:0000270"/>
    <property type="project" value="RGD"/>
</dbReference>
<dbReference type="GO" id="GO:0010212">
    <property type="term" value="P:response to ionizing radiation"/>
    <property type="evidence" value="ECO:0000270"/>
    <property type="project" value="RGD"/>
</dbReference>
<dbReference type="GO" id="GO:0051597">
    <property type="term" value="P:response to methylmercury"/>
    <property type="evidence" value="ECO:0000270"/>
    <property type="project" value="RGD"/>
</dbReference>
<dbReference type="GO" id="GO:0031667">
    <property type="term" value="P:response to nutrient levels"/>
    <property type="evidence" value="ECO:0000270"/>
    <property type="project" value="RGD"/>
</dbReference>
<dbReference type="GO" id="GO:0032526">
    <property type="term" value="P:response to retinoic acid"/>
    <property type="evidence" value="ECO:0000270"/>
    <property type="project" value="RGD"/>
</dbReference>
<dbReference type="GO" id="GO:0048545">
    <property type="term" value="P:response to steroid hormone"/>
    <property type="evidence" value="ECO:0000270"/>
    <property type="project" value="RGD"/>
</dbReference>
<dbReference type="GO" id="GO:0009636">
    <property type="term" value="P:response to toxic substance"/>
    <property type="evidence" value="ECO:0000270"/>
    <property type="project" value="RGD"/>
</dbReference>
<dbReference type="GO" id="GO:0009410">
    <property type="term" value="P:response to xenobiotic stimulus"/>
    <property type="evidence" value="ECO:0000270"/>
    <property type="project" value="RGD"/>
</dbReference>
<dbReference type="GO" id="GO:0006694">
    <property type="term" value="P:steroid biosynthetic process"/>
    <property type="evidence" value="ECO:0000315"/>
    <property type="project" value="RGD"/>
</dbReference>
<dbReference type="GO" id="GO:0008202">
    <property type="term" value="P:steroid metabolic process"/>
    <property type="evidence" value="ECO:0000250"/>
    <property type="project" value="UniProtKB"/>
</dbReference>
<dbReference type="CDD" id="cd20673">
    <property type="entry name" value="CYP17A1"/>
    <property type="match status" value="1"/>
</dbReference>
<dbReference type="FunFam" id="1.10.630.10:FF:000002">
    <property type="entry name" value="Cytochrome P450 1A1"/>
    <property type="match status" value="1"/>
</dbReference>
<dbReference type="Gene3D" id="1.10.630.10">
    <property type="entry name" value="Cytochrome P450"/>
    <property type="match status" value="1"/>
</dbReference>
<dbReference type="InterPro" id="IPR001128">
    <property type="entry name" value="Cyt_P450"/>
</dbReference>
<dbReference type="InterPro" id="IPR017972">
    <property type="entry name" value="Cyt_P450_CS"/>
</dbReference>
<dbReference type="InterPro" id="IPR002401">
    <property type="entry name" value="Cyt_P450_E_grp-I"/>
</dbReference>
<dbReference type="InterPro" id="IPR036396">
    <property type="entry name" value="Cyt_P450_sf"/>
</dbReference>
<dbReference type="PANTHER" id="PTHR24289">
    <property type="entry name" value="STEROID 17-ALPHA-HYDROXYLASE/17,20 LYASE"/>
    <property type="match status" value="1"/>
</dbReference>
<dbReference type="PANTHER" id="PTHR24289:SF13">
    <property type="entry name" value="STEROID 17-ALPHA-HYDROXYLASE_17,20 LYASE"/>
    <property type="match status" value="1"/>
</dbReference>
<dbReference type="Pfam" id="PF00067">
    <property type="entry name" value="p450"/>
    <property type="match status" value="1"/>
</dbReference>
<dbReference type="PRINTS" id="PR00463">
    <property type="entry name" value="EP450I"/>
</dbReference>
<dbReference type="PRINTS" id="PR00385">
    <property type="entry name" value="P450"/>
</dbReference>
<dbReference type="SUPFAM" id="SSF48264">
    <property type="entry name" value="Cytochrome P450"/>
    <property type="match status" value="1"/>
</dbReference>
<dbReference type="PROSITE" id="PS00086">
    <property type="entry name" value="CYTOCHROME_P450"/>
    <property type="match status" value="1"/>
</dbReference>
<proteinExistence type="evidence at protein level"/>
<name>CP17A_RAT</name>
<accession>P11715</accession>
<accession>Q68FY2</accession>
<accession>Q6LAE5</accession>
<evidence type="ECO:0000250" key="1"/>
<evidence type="ECO:0000250" key="2">
    <source>
        <dbReference type="UniProtKB" id="P05093"/>
    </source>
</evidence>
<evidence type="ECO:0000305" key="3"/>
<gene>
    <name type="primary">Cyp17a1</name>
    <name type="synonym">Cyp17</name>
</gene>
<organism>
    <name type="scientific">Rattus norvegicus</name>
    <name type="common">Rat</name>
    <dbReference type="NCBI Taxonomy" id="10116"/>
    <lineage>
        <taxon>Eukaryota</taxon>
        <taxon>Metazoa</taxon>
        <taxon>Chordata</taxon>
        <taxon>Craniata</taxon>
        <taxon>Vertebrata</taxon>
        <taxon>Euteleostomi</taxon>
        <taxon>Mammalia</taxon>
        <taxon>Eutheria</taxon>
        <taxon>Euarchontoglires</taxon>
        <taxon>Glires</taxon>
        <taxon>Rodentia</taxon>
        <taxon>Myomorpha</taxon>
        <taxon>Muroidea</taxon>
        <taxon>Muridae</taxon>
        <taxon>Murinae</taxon>
        <taxon>Rattus</taxon>
    </lineage>
</organism>